<organism>
    <name type="scientific">Saccharomyces cerevisiae (strain ATCC 204508 / S288c)</name>
    <name type="common">Baker's yeast</name>
    <dbReference type="NCBI Taxonomy" id="559292"/>
    <lineage>
        <taxon>Eukaryota</taxon>
        <taxon>Fungi</taxon>
        <taxon>Dikarya</taxon>
        <taxon>Ascomycota</taxon>
        <taxon>Saccharomycotina</taxon>
        <taxon>Saccharomycetes</taxon>
        <taxon>Saccharomycetales</taxon>
        <taxon>Saccharomycetaceae</taxon>
        <taxon>Saccharomyces</taxon>
    </lineage>
</organism>
<gene>
    <name type="primary">RSC2</name>
    <name type="ordered locus">YLR357W</name>
    <name type="ORF">L9638.1</name>
</gene>
<proteinExistence type="evidence at protein level"/>
<keyword id="KW-0002">3D-structure</keyword>
<keyword id="KW-0103">Bromodomain</keyword>
<keyword id="KW-0156">Chromatin regulator</keyword>
<keyword id="KW-0903">Direct protein sequencing</keyword>
<keyword id="KW-0539">Nucleus</keyword>
<keyword id="KW-0597">Phosphoprotein</keyword>
<keyword id="KW-1185">Reference proteome</keyword>
<keyword id="KW-0677">Repeat</keyword>
<keyword id="KW-0749">Sporulation</keyword>
<keyword id="KW-0804">Transcription</keyword>
<keyword id="KW-0805">Transcription regulation</keyword>
<accession>Q06488</accession>
<accession>D6VYZ5</accession>
<comment type="function">
    <text evidence="4 5 6 7 8 9 10 13">Component of the chromatin structure remodeling complex (RSC), which is involved in transcription regulation and nucleosome positioning. RSC is responsible for the transfer of a histone octamer from a nucleosome core particle to naked DNA. The reaction requires ATP and involves an activated RSC-nucleosome intermediate. Remodeling reaction also involves DNA translocation, DNA twist and conformational change. As a reconfigurer of centromeric and flanking nucleosomes, RSC complex is required both for proper kinetochore function in chromosome segregation and, via a PKC1-dependent signaling pathway, for organization of the cellular cytoskeleton. This subunit is involved in meiotic sporulation through regulating IME2 expression, and is also essential for 2-micron plasmid maintenance and for normal REP1 protein localization.</text>
</comment>
<comment type="subunit">
    <text>Component of the two forms of the RSC complex composed of at least either RSC1 or RSC2, and ARP7, ARP9, LDB7, NPL6, RSC3, RSC30, RSC4, RSC58, RSC6, RSC8, RSC9, SFH1, STH1, HTL1 and probably RTT102. The complexes interact with histone and histone variant components of centromeric chromatin.</text>
</comment>
<comment type="subcellular location">
    <subcellularLocation>
        <location evidence="9">Nucleus</location>
    </subcellularLocation>
    <text>Localizes to centromeric and flanking chromatin. Association with these loci is dependent on STH1.</text>
</comment>
<comment type="disruption phenotype">
    <text evidence="12">Heterochromatin spreading downstream of the silent mating-type locus HMR.</text>
</comment>
<comment type="miscellaneous">
    <text evidence="11">Present with 2330 molecules/cell in log phase SD medium.</text>
</comment>
<comment type="similarity">
    <text evidence="14">Belongs to the RSC1 family.</text>
</comment>
<name>RSC2_YEAST</name>
<reference key="1">
    <citation type="journal article" date="1997" name="Nature">
        <title>The nucleotide sequence of Saccharomyces cerevisiae chromosome XII.</title>
        <authorList>
            <person name="Johnston M."/>
            <person name="Hillier L.W."/>
            <person name="Riles L."/>
            <person name="Albermann K."/>
            <person name="Andre B."/>
            <person name="Ansorge W."/>
            <person name="Benes V."/>
            <person name="Brueckner M."/>
            <person name="Delius H."/>
            <person name="Dubois E."/>
            <person name="Duesterhoeft A."/>
            <person name="Entian K.-D."/>
            <person name="Floeth M."/>
            <person name="Goffeau A."/>
            <person name="Hebling U."/>
            <person name="Heumann K."/>
            <person name="Heuss-Neitzel D."/>
            <person name="Hilbert H."/>
            <person name="Hilger F."/>
            <person name="Kleine K."/>
            <person name="Koetter P."/>
            <person name="Louis E.J."/>
            <person name="Messenguy F."/>
            <person name="Mewes H.-W."/>
            <person name="Miosga T."/>
            <person name="Moestl D."/>
            <person name="Mueller-Auer S."/>
            <person name="Nentwich U."/>
            <person name="Obermaier B."/>
            <person name="Piravandi E."/>
            <person name="Pohl T.M."/>
            <person name="Portetelle D."/>
            <person name="Purnelle B."/>
            <person name="Rechmann S."/>
            <person name="Rieger M."/>
            <person name="Rinke M."/>
            <person name="Rose M."/>
            <person name="Scharfe M."/>
            <person name="Scherens B."/>
            <person name="Scholler P."/>
            <person name="Schwager C."/>
            <person name="Schwarz S."/>
            <person name="Underwood A.P."/>
            <person name="Urrestarazu L.A."/>
            <person name="Vandenbol M."/>
            <person name="Verhasselt P."/>
            <person name="Vierendeels F."/>
            <person name="Voet M."/>
            <person name="Volckaert G."/>
            <person name="Voss H."/>
            <person name="Wambutt R."/>
            <person name="Wedler E."/>
            <person name="Wedler H."/>
            <person name="Zimmermann F.K."/>
            <person name="Zollner A."/>
            <person name="Hani J."/>
            <person name="Hoheisel J.D."/>
        </authorList>
    </citation>
    <scope>NUCLEOTIDE SEQUENCE [LARGE SCALE GENOMIC DNA]</scope>
    <source>
        <strain>ATCC 204508 / S288c</strain>
    </source>
</reference>
<reference key="2">
    <citation type="journal article" date="2014" name="G3 (Bethesda)">
        <title>The reference genome sequence of Saccharomyces cerevisiae: Then and now.</title>
        <authorList>
            <person name="Engel S.R."/>
            <person name="Dietrich F.S."/>
            <person name="Fisk D.G."/>
            <person name="Binkley G."/>
            <person name="Balakrishnan R."/>
            <person name="Costanzo M.C."/>
            <person name="Dwight S.S."/>
            <person name="Hitz B.C."/>
            <person name="Karra K."/>
            <person name="Nash R.S."/>
            <person name="Weng S."/>
            <person name="Wong E.D."/>
            <person name="Lloyd P."/>
            <person name="Skrzypek M.S."/>
            <person name="Miyasato S.R."/>
            <person name="Simison M."/>
            <person name="Cherry J.M."/>
        </authorList>
    </citation>
    <scope>GENOME REANNOTATION</scope>
    <source>
        <strain>ATCC 204508 / S288c</strain>
    </source>
</reference>
<reference key="3">
    <citation type="journal article" date="2002" name="Mol. Cell. Biol.">
        <title>RSC2, encoding a component of the RSC nucleosome remodeling complex, is essential for 2 micrometer plasmid maintenance in Saccharomyces cerevisiae.</title>
        <authorList>
            <person name="Wong M.C.V.L."/>
            <person name="Scott-Drew S.R.S."/>
            <person name="Hayes M.J."/>
            <person name="Howard P.J."/>
            <person name="Murray J.A.H."/>
        </authorList>
    </citation>
    <scope>NUCLEOTIDE SEQUENCE [GENOMIC DNA]</scope>
    <scope>FUNCTION</scope>
    <scope>MUTAGENESIS OF GLU-468 AND GLY-601</scope>
</reference>
<reference key="4">
    <citation type="journal article" date="1999" name="Mol. Cell">
        <title>Two functionally distinct forms of the RSC nucleosome-remodeling complex, containing essential AT hook, BAH, and bromodomains.</title>
        <authorList>
            <person name="Cairns B.R."/>
            <person name="Schlichter A."/>
            <person name="Erdjument-Bromage H."/>
            <person name="Tempst P."/>
            <person name="Kornberg R.D."/>
            <person name="Winston F."/>
        </authorList>
    </citation>
    <scope>PROTEIN SEQUENCE OF 241-253</scope>
    <scope>COMPOSITION OF THE RSC COMPLEX</scope>
</reference>
<reference key="5">
    <citation type="journal article" date="1996" name="Cell">
        <title>RSC, an essential, abundant chromatin-remodeling complex.</title>
        <authorList>
            <person name="Cairns B.R."/>
            <person name="Lorch Y."/>
            <person name="Li Y."/>
            <person name="Zhang M."/>
            <person name="Lacomis L."/>
            <person name="Erdjument-Bromage H."/>
            <person name="Tempst P."/>
            <person name="Du J."/>
            <person name="Laurent B.C."/>
            <person name="Kornberg R.D."/>
        </authorList>
    </citation>
    <scope>FUNCTION OF THE RSC COMPLEX</scope>
    <scope>COMPOSITION OF THE RSC COMPLEX</scope>
</reference>
<reference key="6">
    <citation type="journal article" date="1999" name="Cell">
        <title>Histone octamer transfer by a chromatin-remodeling complex.</title>
        <authorList>
            <person name="Lorch Y."/>
            <person name="Zhang M."/>
            <person name="Kornberg R.D."/>
        </authorList>
    </citation>
    <scope>FUNCTION OF THE RSC COMPLEX</scope>
</reference>
<reference key="7">
    <citation type="journal article" date="1999" name="EMBO J.">
        <title>Transcriptional repression of the yeast CHA1 gene requires the chromatin-remodeling complex RSC.</title>
        <authorList>
            <person name="Moreira J.M.A."/>
            <person name="Holmberg S."/>
        </authorList>
    </citation>
    <scope>FUNCTION OF THE RSC COMPLEX</scope>
</reference>
<reference key="8">
    <citation type="journal article" date="2002" name="FEMS Yeast Res.">
        <title>Functional differences between RSC1 and RSC2, components of a for growth essential chromatin-remodeling complex of Saccharomyces cerevisiae, during the sporulation process.</title>
        <authorList>
            <person name="Yukawa M."/>
            <person name="Koyama H."/>
            <person name="Miyahara K."/>
            <person name="Tsuchiya E."/>
        </authorList>
    </citation>
    <scope>FUNCTION</scope>
</reference>
<reference key="9">
    <citation type="journal article" date="2002" name="Genes Dev.">
        <title>Chromatin remodeling by RSC involves ATP-dependent DNA translocation.</title>
        <authorList>
            <person name="Saha A."/>
            <person name="Wittmeyer J."/>
            <person name="Cairns B.R."/>
        </authorList>
    </citation>
    <scope>FUNCTION OF THE RSC COMPLEX</scope>
</reference>
<reference key="10">
    <citation type="journal article" date="2002" name="Genetics">
        <title>Yeast RSC function is required for organization of the cellular cytoskeleton via an alternative PKC1 pathway.</title>
        <authorList>
            <person name="Chai B."/>
            <person name="Hsu J.-M."/>
            <person name="Du J."/>
            <person name="Laurent B.C."/>
        </authorList>
    </citation>
    <scope>FUNCTION OF THE RSC COMPLEX</scope>
</reference>
<reference key="11">
    <citation type="journal article" date="2003" name="Mol. Cell. Biol.">
        <title>The yeast RSC chromatin-remodeling complex is required for kinetochore function in chromosome segregation.</title>
        <authorList>
            <person name="Hsu J.-M."/>
            <person name="Huang J."/>
            <person name="Meluh P.B."/>
            <person name="Laurent B.C."/>
        </authorList>
    </citation>
    <scope>FUNCTION OF THE RSC COMPLEX</scope>
    <scope>SUBCELLULAR LOCATION</scope>
    <scope>INTERACTION OF THE RSC COMPLEX WITH HISTONES</scope>
</reference>
<reference key="12">
    <citation type="journal article" date="2003" name="Nature">
        <title>Global analysis of protein expression in yeast.</title>
        <authorList>
            <person name="Ghaemmaghami S."/>
            <person name="Huh W.-K."/>
            <person name="Bower K."/>
            <person name="Howson R.W."/>
            <person name="Belle A."/>
            <person name="Dephoure N."/>
            <person name="O'Shea E.K."/>
            <person name="Weissman J.S."/>
        </authorList>
    </citation>
    <scope>LEVEL OF PROTEIN EXPRESSION [LARGE SCALE ANALYSIS]</scope>
</reference>
<reference key="13">
    <citation type="journal article" date="2005" name="Genetics">
        <title>Multiple bromodomain genes are involved in restricting the spread of heterochromatic silencing at the Saccharomyces cerevisiae HMR-tRNA boundary.</title>
        <authorList>
            <person name="Jambunathan N."/>
            <person name="Martinez A.W."/>
            <person name="Robert E.C."/>
            <person name="Agochukwu N.B."/>
            <person name="Ibos M.E."/>
            <person name="Dugas S.L."/>
            <person name="Donze D."/>
        </authorList>
    </citation>
    <scope>DISRUPTION PHENOTYPE</scope>
</reference>
<reference key="14">
    <citation type="journal article" date="2005" name="Mol. Cell. Proteomics">
        <title>Quantitative phosphoproteomics applied to the yeast pheromone signaling pathway.</title>
        <authorList>
            <person name="Gruhler A."/>
            <person name="Olsen J.V."/>
            <person name="Mohammed S."/>
            <person name="Mortensen P."/>
            <person name="Faergeman N.J."/>
            <person name="Mann M."/>
            <person name="Jensen O.N."/>
        </authorList>
    </citation>
    <scope>PHOSPHORYLATION [LARGE SCALE ANALYSIS] AT SER-682</scope>
    <scope>IDENTIFICATION BY MASS SPECTROMETRY [LARGE SCALE ANALYSIS]</scope>
    <source>
        <strain>YAL6B</strain>
    </source>
</reference>
<reference key="15">
    <citation type="journal article" date="2007" name="J. Proteome Res.">
        <title>Large-scale phosphorylation analysis of alpha-factor-arrested Saccharomyces cerevisiae.</title>
        <authorList>
            <person name="Li X."/>
            <person name="Gerber S.A."/>
            <person name="Rudner A.D."/>
            <person name="Beausoleil S.A."/>
            <person name="Haas W."/>
            <person name="Villen J."/>
            <person name="Elias J.E."/>
            <person name="Gygi S.P."/>
        </authorList>
    </citation>
    <scope>PHOSPHORYLATION [LARGE SCALE ANALYSIS] AT SER-682</scope>
    <scope>IDENTIFICATION BY MASS SPECTROMETRY [LARGE SCALE ANALYSIS]</scope>
    <source>
        <strain>ADR376</strain>
    </source>
</reference>
<reference key="16">
    <citation type="journal article" date="2008" name="Mol. Cell. Proteomics">
        <title>A multidimensional chromatography technology for in-depth phosphoproteome analysis.</title>
        <authorList>
            <person name="Albuquerque C.P."/>
            <person name="Smolka M.B."/>
            <person name="Payne S.H."/>
            <person name="Bafna V."/>
            <person name="Eng J."/>
            <person name="Zhou H."/>
        </authorList>
    </citation>
    <scope>PHOSPHORYLATION [LARGE SCALE ANALYSIS] AT SER-682</scope>
    <scope>IDENTIFICATION BY MASS SPECTROMETRY [LARGE SCALE ANALYSIS]</scope>
</reference>
<reference key="17">
    <citation type="journal article" date="2009" name="Science">
        <title>Global analysis of Cdk1 substrate phosphorylation sites provides insights into evolution.</title>
        <authorList>
            <person name="Holt L.J."/>
            <person name="Tuch B.B."/>
            <person name="Villen J."/>
            <person name="Johnson A.D."/>
            <person name="Gygi S.P."/>
            <person name="Morgan D.O."/>
        </authorList>
    </citation>
    <scope>PHOSPHORYLATION [LARGE SCALE ANALYSIS] AT TYR-612 AND SER-682</scope>
    <scope>IDENTIFICATION BY MASS SPECTROMETRY [LARGE SCALE ANALYSIS]</scope>
</reference>
<dbReference type="EMBL" id="U19102">
    <property type="protein sequence ID" value="AAB67747.1"/>
    <property type="molecule type" value="Genomic_DNA"/>
</dbReference>
<dbReference type="EMBL" id="BK006945">
    <property type="protein sequence ID" value="DAA09661.1"/>
    <property type="molecule type" value="Genomic_DNA"/>
</dbReference>
<dbReference type="PIR" id="S51465">
    <property type="entry name" value="S51465"/>
</dbReference>
<dbReference type="RefSeq" id="NP_013461.1">
    <property type="nucleotide sequence ID" value="NM_001182246.1"/>
</dbReference>
<dbReference type="PDB" id="4BB7">
    <property type="method" value="X-ray"/>
    <property type="resolution" value="2.40 A"/>
    <property type="chains" value="A/B/C/D=401-641"/>
</dbReference>
<dbReference type="PDB" id="6K15">
    <property type="method" value="EM"/>
    <property type="resolution" value="3.40 A"/>
    <property type="chains" value="L=1-889"/>
</dbReference>
<dbReference type="PDB" id="6KW3">
    <property type="method" value="EM"/>
    <property type="resolution" value="7.13 A"/>
    <property type="chains" value="L=1-889"/>
</dbReference>
<dbReference type="PDB" id="6KW4">
    <property type="method" value="EM"/>
    <property type="resolution" value="7.55 A"/>
    <property type="chains" value="L=1-889"/>
</dbReference>
<dbReference type="PDB" id="6KW5">
    <property type="method" value="EM"/>
    <property type="resolution" value="10.13 A"/>
    <property type="chains" value="L=1-889"/>
</dbReference>
<dbReference type="PDB" id="6V8O">
    <property type="method" value="EM"/>
    <property type="resolution" value="3.07 A"/>
    <property type="chains" value="F=1-889"/>
</dbReference>
<dbReference type="PDB" id="6V92">
    <property type="method" value="EM"/>
    <property type="resolution" value="20.00 A"/>
    <property type="chains" value="F=1-889"/>
</dbReference>
<dbReference type="PDBsum" id="4BB7"/>
<dbReference type="PDBsum" id="6K15"/>
<dbReference type="PDBsum" id="6KW3"/>
<dbReference type="PDBsum" id="6KW4"/>
<dbReference type="PDBsum" id="6KW5"/>
<dbReference type="PDBsum" id="6V8O"/>
<dbReference type="PDBsum" id="6V92"/>
<dbReference type="EMDB" id="EMD-0777"/>
<dbReference type="EMDB" id="EMD-0778"/>
<dbReference type="EMDB" id="EMD-0779"/>
<dbReference type="EMDB" id="EMD-21107"/>
<dbReference type="EMDB" id="EMD-21114"/>
<dbReference type="EMDB" id="EMD-9905"/>
<dbReference type="SMR" id="Q06488"/>
<dbReference type="BioGRID" id="31619">
    <property type="interactions" value="306"/>
</dbReference>
<dbReference type="ComplexPortal" id="CPX-1888">
    <property type="entry name" value="RSC chromatin remodelling complex, variant RSC2"/>
</dbReference>
<dbReference type="DIP" id="DIP-863N"/>
<dbReference type="FunCoup" id="Q06488">
    <property type="interactions" value="461"/>
</dbReference>
<dbReference type="IntAct" id="Q06488">
    <property type="interactions" value="59"/>
</dbReference>
<dbReference type="MINT" id="Q06488"/>
<dbReference type="STRING" id="4932.YLR357W"/>
<dbReference type="GlyGen" id="Q06488">
    <property type="glycosylation" value="1 site"/>
</dbReference>
<dbReference type="iPTMnet" id="Q06488"/>
<dbReference type="PaxDb" id="4932-YLR357W"/>
<dbReference type="PeptideAtlas" id="Q06488"/>
<dbReference type="EnsemblFungi" id="YLR357W_mRNA">
    <property type="protein sequence ID" value="YLR357W"/>
    <property type="gene ID" value="YLR357W"/>
</dbReference>
<dbReference type="GeneID" id="851071"/>
<dbReference type="KEGG" id="sce:YLR357W"/>
<dbReference type="AGR" id="SGD:S000004349"/>
<dbReference type="SGD" id="S000004349">
    <property type="gene designation" value="RSC2"/>
</dbReference>
<dbReference type="VEuPathDB" id="FungiDB:YLR357W"/>
<dbReference type="eggNOG" id="KOG1827">
    <property type="taxonomic scope" value="Eukaryota"/>
</dbReference>
<dbReference type="GeneTree" id="ENSGT00940000176545"/>
<dbReference type="HOGENOM" id="CLU_007728_2_0_1"/>
<dbReference type="InParanoid" id="Q06488"/>
<dbReference type="OMA" id="FFKYESP"/>
<dbReference type="OrthoDB" id="1742084at2759"/>
<dbReference type="BioCyc" id="YEAST:G3O-32429-MONOMER"/>
<dbReference type="BioGRID-ORCS" id="851071">
    <property type="hits" value="4 hits in 10 CRISPR screens"/>
</dbReference>
<dbReference type="EvolutionaryTrace" id="Q06488"/>
<dbReference type="PRO" id="PR:Q06488"/>
<dbReference type="Proteomes" id="UP000002311">
    <property type="component" value="Chromosome XII"/>
</dbReference>
<dbReference type="RNAct" id="Q06488">
    <property type="molecule type" value="protein"/>
</dbReference>
<dbReference type="GO" id="GO:0016586">
    <property type="term" value="C:RSC-type complex"/>
    <property type="evidence" value="ECO:0000314"/>
    <property type="project" value="UniProtKB"/>
</dbReference>
<dbReference type="GO" id="GO:0003682">
    <property type="term" value="F:chromatin binding"/>
    <property type="evidence" value="ECO:0000314"/>
    <property type="project" value="SGD"/>
</dbReference>
<dbReference type="GO" id="GO:0006338">
    <property type="term" value="P:chromatin remodeling"/>
    <property type="evidence" value="ECO:0000314"/>
    <property type="project" value="UniProtKB"/>
</dbReference>
<dbReference type="GO" id="GO:0007059">
    <property type="term" value="P:chromosome segregation"/>
    <property type="evidence" value="ECO:0000316"/>
    <property type="project" value="SGD"/>
</dbReference>
<dbReference type="GO" id="GO:0000724">
    <property type="term" value="P:double-strand break repair via homologous recombination"/>
    <property type="evidence" value="ECO:0000315"/>
    <property type="project" value="SGD"/>
</dbReference>
<dbReference type="GO" id="GO:0006303">
    <property type="term" value="P:double-strand break repair via nonhomologous end joining"/>
    <property type="evidence" value="ECO:0000353"/>
    <property type="project" value="SGD"/>
</dbReference>
<dbReference type="GO" id="GO:0006337">
    <property type="term" value="P:nucleosome disassembly"/>
    <property type="evidence" value="ECO:0000314"/>
    <property type="project" value="SGD"/>
</dbReference>
<dbReference type="GO" id="GO:0006276">
    <property type="term" value="P:plasmid maintenance"/>
    <property type="evidence" value="ECO:0000315"/>
    <property type="project" value="UniProtKB"/>
</dbReference>
<dbReference type="GO" id="GO:0042173">
    <property type="term" value="P:regulation of sporulation resulting in formation of a cellular spore"/>
    <property type="evidence" value="ECO:0000315"/>
    <property type="project" value="UniProtKB"/>
</dbReference>
<dbReference type="GO" id="GO:0007062">
    <property type="term" value="P:sister chromatid cohesion"/>
    <property type="evidence" value="ECO:0000315"/>
    <property type="project" value="SGD"/>
</dbReference>
<dbReference type="GO" id="GO:0030435">
    <property type="term" value="P:sporulation resulting in formation of a cellular spore"/>
    <property type="evidence" value="ECO:0007669"/>
    <property type="project" value="UniProtKB-KW"/>
</dbReference>
<dbReference type="GO" id="GO:0006368">
    <property type="term" value="P:transcription elongation by RNA polymerase II"/>
    <property type="evidence" value="ECO:0000314"/>
    <property type="project" value="SGD"/>
</dbReference>
<dbReference type="GO" id="GO:0070914">
    <property type="term" value="P:UV-damage excision repair"/>
    <property type="evidence" value="ECO:0000315"/>
    <property type="project" value="SGD"/>
</dbReference>
<dbReference type="CDD" id="cd04717">
    <property type="entry name" value="BAH_polybromo"/>
    <property type="match status" value="1"/>
</dbReference>
<dbReference type="CDD" id="cd05521">
    <property type="entry name" value="Bromo_Rsc1_2_I"/>
    <property type="match status" value="1"/>
</dbReference>
<dbReference type="CDD" id="cd05522">
    <property type="entry name" value="Bromo_Rsc1_2_II"/>
    <property type="match status" value="1"/>
</dbReference>
<dbReference type="FunFam" id="1.20.920.10:FF:000042">
    <property type="entry name" value="RSC complex member"/>
    <property type="match status" value="1"/>
</dbReference>
<dbReference type="FunFam" id="1.20.920.10:FF:000049">
    <property type="entry name" value="RSC complex member"/>
    <property type="match status" value="1"/>
</dbReference>
<dbReference type="FunFam" id="2.30.30.490:FF:000016">
    <property type="entry name" value="RSC complex member"/>
    <property type="match status" value="1"/>
</dbReference>
<dbReference type="Gene3D" id="2.30.30.490">
    <property type="match status" value="1"/>
</dbReference>
<dbReference type="Gene3D" id="1.20.920.10">
    <property type="entry name" value="Bromodomain-like"/>
    <property type="match status" value="2"/>
</dbReference>
<dbReference type="InterPro" id="IPR001025">
    <property type="entry name" value="BAH_dom"/>
</dbReference>
<dbReference type="InterPro" id="IPR043151">
    <property type="entry name" value="BAH_sf"/>
</dbReference>
<dbReference type="InterPro" id="IPR001487">
    <property type="entry name" value="Bromodomain"/>
</dbReference>
<dbReference type="InterPro" id="IPR036427">
    <property type="entry name" value="Bromodomain-like_sf"/>
</dbReference>
<dbReference type="InterPro" id="IPR018359">
    <property type="entry name" value="Bromodomain_CS"/>
</dbReference>
<dbReference type="InterPro" id="IPR037382">
    <property type="entry name" value="Rsc/polybromo"/>
</dbReference>
<dbReference type="InterPro" id="IPR048047">
    <property type="entry name" value="RSC1/2_bromodom"/>
</dbReference>
<dbReference type="InterPro" id="IPR035700">
    <property type="entry name" value="Rsc1/Rsc2_Bromo"/>
</dbReference>
<dbReference type="PANTHER" id="PTHR16062:SF21">
    <property type="entry name" value="CHROMATIN STRUCTURE-REMODELING COMPLEX SUBUNIT RSC1-RELATED"/>
    <property type="match status" value="1"/>
</dbReference>
<dbReference type="PANTHER" id="PTHR16062">
    <property type="entry name" value="SWI/SNF-RELATED"/>
    <property type="match status" value="1"/>
</dbReference>
<dbReference type="Pfam" id="PF01426">
    <property type="entry name" value="BAH"/>
    <property type="match status" value="1"/>
</dbReference>
<dbReference type="Pfam" id="PF00439">
    <property type="entry name" value="Bromodomain"/>
    <property type="match status" value="2"/>
</dbReference>
<dbReference type="PRINTS" id="PR00503">
    <property type="entry name" value="BROMODOMAIN"/>
</dbReference>
<dbReference type="SMART" id="SM00439">
    <property type="entry name" value="BAH"/>
    <property type="match status" value="1"/>
</dbReference>
<dbReference type="SMART" id="SM00297">
    <property type="entry name" value="BROMO"/>
    <property type="match status" value="2"/>
</dbReference>
<dbReference type="SUPFAM" id="SSF47370">
    <property type="entry name" value="Bromodomain"/>
    <property type="match status" value="2"/>
</dbReference>
<dbReference type="PROSITE" id="PS51038">
    <property type="entry name" value="BAH"/>
    <property type="match status" value="1"/>
</dbReference>
<dbReference type="PROSITE" id="PS00633">
    <property type="entry name" value="BROMODOMAIN_1"/>
    <property type="match status" value="1"/>
</dbReference>
<dbReference type="PROSITE" id="PS50014">
    <property type="entry name" value="BROMODOMAIN_2"/>
    <property type="match status" value="2"/>
</dbReference>
<protein>
    <recommendedName>
        <fullName>Chromatin structure-remodeling complex subunit RSC2</fullName>
    </recommendedName>
    <alternativeName>
        <fullName>RSC complex subunit RSC2</fullName>
    </alternativeName>
    <alternativeName>
        <fullName>Remodel the structure of chromatin complex subunit 2</fullName>
    </alternativeName>
</protein>
<feature type="chain" id="PRO_0000211212" description="Chromatin structure-remodeling complex subunit RSC2">
    <location>
        <begin position="1"/>
        <end position="889"/>
    </location>
</feature>
<feature type="domain" description="Bromo 1" evidence="1">
    <location>
        <begin position="12"/>
        <end position="120"/>
    </location>
</feature>
<feature type="domain" description="Bromo 2" evidence="1">
    <location>
        <begin position="280"/>
        <end position="382"/>
    </location>
</feature>
<feature type="domain" description="BAH" evidence="2">
    <location>
        <begin position="408"/>
        <end position="526"/>
    </location>
</feature>
<feature type="region of interest" description="Disordered" evidence="3">
    <location>
        <begin position="151"/>
        <end position="268"/>
    </location>
</feature>
<feature type="region of interest" description="Disordered" evidence="3">
    <location>
        <begin position="601"/>
        <end position="624"/>
    </location>
</feature>
<feature type="region of interest" description="Disordered" evidence="3">
    <location>
        <begin position="831"/>
        <end position="865"/>
    </location>
</feature>
<feature type="compositionally biased region" description="Low complexity" evidence="3">
    <location>
        <begin position="158"/>
        <end position="174"/>
    </location>
</feature>
<feature type="compositionally biased region" description="Acidic residues" evidence="3">
    <location>
        <begin position="197"/>
        <end position="209"/>
    </location>
</feature>
<feature type="compositionally biased region" description="Basic and acidic residues" evidence="3">
    <location>
        <begin position="210"/>
        <end position="222"/>
    </location>
</feature>
<feature type="compositionally biased region" description="Polar residues" evidence="3">
    <location>
        <begin position="241"/>
        <end position="250"/>
    </location>
</feature>
<feature type="compositionally biased region" description="Basic residues" evidence="3">
    <location>
        <begin position="255"/>
        <end position="268"/>
    </location>
</feature>
<feature type="modified residue" description="Phosphotyrosine" evidence="18">
    <location>
        <position position="612"/>
    </location>
</feature>
<feature type="modified residue" description="Phosphoserine" evidence="15 16 17 18">
    <location>
        <position position="682"/>
    </location>
</feature>
<feature type="mutagenesis site" description="In dpm3; defective in plasmid maintenance." evidence="6">
    <original>E</original>
    <variation>K</variation>
    <location>
        <position position="468"/>
    </location>
</feature>
<feature type="mutagenesis site" description="In dpm18; defective in plasmid maintenance." evidence="6">
    <original>G</original>
    <variation>E</variation>
    <location>
        <position position="601"/>
    </location>
</feature>
<feature type="strand" evidence="19">
    <location>
        <begin position="403"/>
        <end position="405"/>
    </location>
</feature>
<feature type="strand" evidence="19">
    <location>
        <begin position="408"/>
        <end position="410"/>
    </location>
</feature>
<feature type="strand" evidence="19">
    <location>
        <begin position="415"/>
        <end position="418"/>
    </location>
</feature>
<feature type="strand" evidence="19">
    <location>
        <begin position="428"/>
        <end position="437"/>
    </location>
</feature>
<feature type="strand" evidence="19">
    <location>
        <begin position="443"/>
        <end position="451"/>
    </location>
</feature>
<feature type="helix" evidence="19">
    <location>
        <begin position="453"/>
        <end position="455"/>
    </location>
</feature>
<feature type="strand" evidence="19">
    <location>
        <begin position="462"/>
        <end position="465"/>
    </location>
</feature>
<feature type="strand" evidence="19">
    <location>
        <begin position="470"/>
        <end position="479"/>
    </location>
</feature>
<feature type="helix" evidence="19">
    <location>
        <begin position="480"/>
        <end position="482"/>
    </location>
</feature>
<feature type="strand" evidence="19">
    <location>
        <begin position="483"/>
        <end position="486"/>
    </location>
</feature>
<feature type="strand" evidence="19">
    <location>
        <begin position="488"/>
        <end position="491"/>
    </location>
</feature>
<feature type="helix" evidence="19">
    <location>
        <begin position="492"/>
        <end position="497"/>
    </location>
</feature>
<feature type="strand" evidence="19">
    <location>
        <begin position="498"/>
        <end position="501"/>
    </location>
</feature>
<feature type="strand" evidence="19">
    <location>
        <begin position="508"/>
        <end position="511"/>
    </location>
</feature>
<feature type="strand" evidence="19">
    <location>
        <begin position="513"/>
        <end position="516"/>
    </location>
</feature>
<feature type="turn" evidence="19">
    <location>
        <begin position="517"/>
        <end position="520"/>
    </location>
</feature>
<feature type="strand" evidence="19">
    <location>
        <begin position="521"/>
        <end position="524"/>
    </location>
</feature>
<feature type="helix" evidence="19">
    <location>
        <begin position="528"/>
        <end position="531"/>
    </location>
</feature>
<feature type="helix" evidence="19">
    <location>
        <begin position="534"/>
        <end position="536"/>
    </location>
</feature>
<feature type="strand" evidence="19">
    <location>
        <begin position="543"/>
        <end position="545"/>
    </location>
</feature>
<feature type="strand" evidence="19">
    <location>
        <begin position="547"/>
        <end position="555"/>
    </location>
</feature>
<feature type="helix" evidence="19">
    <location>
        <begin position="559"/>
        <end position="561"/>
    </location>
</feature>
<feature type="strand" evidence="19">
    <location>
        <begin position="621"/>
        <end position="626"/>
    </location>
</feature>
<feature type="turn" evidence="19">
    <location>
        <begin position="627"/>
        <end position="630"/>
    </location>
</feature>
<feature type="strand" evidence="19">
    <location>
        <begin position="631"/>
        <end position="633"/>
    </location>
</feature>
<feature type="strand" evidence="20">
    <location>
        <begin position="748"/>
        <end position="750"/>
    </location>
</feature>
<feature type="strand" evidence="20">
    <location>
        <begin position="760"/>
        <end position="762"/>
    </location>
</feature>
<feature type="strand" evidence="21">
    <location>
        <begin position="791"/>
        <end position="794"/>
    </location>
</feature>
<feature type="turn" evidence="21">
    <location>
        <begin position="809"/>
        <end position="811"/>
    </location>
</feature>
<feature type="helix" evidence="21">
    <location>
        <begin position="863"/>
        <end position="866"/>
    </location>
</feature>
<feature type="helix" evidence="21">
    <location>
        <begin position="872"/>
        <end position="880"/>
    </location>
</feature>
<sequence length="889" mass="102300">MMPDDNSNSSTQNSSALYKDLRKEYESLFTLKEDSGLEISPIFNVLPPKKDYPDYYAVIKNPVSFNTLKKRIPHYTDAQQFMNDVVQIPWNAKTYNTRDSGIYKYALVLEKYLKDTIYPNLKEKYPQLVYPDLGPLPDEPGYEEFQQKLREKAEEVARANAARAESSSSMNSTEAARRLRKTRTSVKRESEPGTDTNNDEDYEATDMDIDNPKDADFPDLIRKPLININPYTRKPLRDNRSTTPSHSGTPQPLGPRHRQVSRTQVKRGRPPIIDLPYIQRMKNVMKVLKKEVLDSGIGLTDLFERLPDRHRDANYYIMIANPISLQDINKKVKTRRYKTFQEFQNDFNLMLTNFRISHRGDPESIKISNILEKTFTSLARFELSKPDRSFIPEGELRYPLDEVIVNNISYHVGDWALLRNQNDPQKPIVGQIFRLWKTPDGKQWLNACWYYRPEQTVHRVDRLFYKNEVMKTGQYRDHLVSNLVGKCYVIHFTRYQRGNPDMKLEGPLFVCEFRYNESDKIFNKIRTWKACLPEEIRDLDEATIPVNGRKFFKYPSPIRHLLPANATPHDRVPEPTMGSPDAPPLVGAVYMRPKMQRDDLGEYATSDDCPRYIIRPNDSPEEGQVDIETGTITTNTPTANALPKTGYSSSKLSSLRYNRSSMSLENQNAIGQQQIPLSRVGSPGAGGPLTVQGLKQHQLQRLQQQQHQYQQQKRSQASRYNIPTIIDDLTSQASRGNLGNIMIDAASSFVLPISITKNVDVLQRTDLHSQTKRSGREEMFPWKKTKGEILWFRGPSVIVNERIINSGDPHLSLPLNRWFTTNKKRKLEYEEVEETMEDVTGKDKDDDGLEPDVENEKESLPGPFVLGLRPSAKFTAHRLSMLRPPSSSS</sequence>
<evidence type="ECO:0000255" key="1">
    <source>
        <dbReference type="PROSITE-ProRule" id="PRU00035"/>
    </source>
</evidence>
<evidence type="ECO:0000255" key="2">
    <source>
        <dbReference type="PROSITE-ProRule" id="PRU00370"/>
    </source>
</evidence>
<evidence type="ECO:0000256" key="3">
    <source>
        <dbReference type="SAM" id="MobiDB-lite"/>
    </source>
</evidence>
<evidence type="ECO:0000269" key="4">
    <source>
    </source>
</evidence>
<evidence type="ECO:0000269" key="5">
    <source>
    </source>
</evidence>
<evidence type="ECO:0000269" key="6">
    <source>
    </source>
</evidence>
<evidence type="ECO:0000269" key="7">
    <source>
    </source>
</evidence>
<evidence type="ECO:0000269" key="8">
    <source>
    </source>
</evidence>
<evidence type="ECO:0000269" key="9">
    <source>
    </source>
</evidence>
<evidence type="ECO:0000269" key="10">
    <source>
    </source>
</evidence>
<evidence type="ECO:0000269" key="11">
    <source>
    </source>
</evidence>
<evidence type="ECO:0000269" key="12">
    <source>
    </source>
</evidence>
<evidence type="ECO:0000269" key="13">
    <source>
    </source>
</evidence>
<evidence type="ECO:0000305" key="14"/>
<evidence type="ECO:0007744" key="15">
    <source>
    </source>
</evidence>
<evidence type="ECO:0007744" key="16">
    <source>
    </source>
</evidence>
<evidence type="ECO:0007744" key="17">
    <source>
    </source>
</evidence>
<evidence type="ECO:0007744" key="18">
    <source>
    </source>
</evidence>
<evidence type="ECO:0007829" key="19">
    <source>
        <dbReference type="PDB" id="4BB7"/>
    </source>
</evidence>
<evidence type="ECO:0007829" key="20">
    <source>
        <dbReference type="PDB" id="6K15"/>
    </source>
</evidence>
<evidence type="ECO:0007829" key="21">
    <source>
        <dbReference type="PDB" id="6V8O"/>
    </source>
</evidence>